<organism>
    <name type="scientific">Arabidopsis thaliana</name>
    <name type="common">Mouse-ear cress</name>
    <dbReference type="NCBI Taxonomy" id="3702"/>
    <lineage>
        <taxon>Eukaryota</taxon>
        <taxon>Viridiplantae</taxon>
        <taxon>Streptophyta</taxon>
        <taxon>Embryophyta</taxon>
        <taxon>Tracheophyta</taxon>
        <taxon>Spermatophyta</taxon>
        <taxon>Magnoliopsida</taxon>
        <taxon>eudicotyledons</taxon>
        <taxon>Gunneridae</taxon>
        <taxon>Pentapetalae</taxon>
        <taxon>rosids</taxon>
        <taxon>malvids</taxon>
        <taxon>Brassicales</taxon>
        <taxon>Brassicaceae</taxon>
        <taxon>Camelineae</taxon>
        <taxon>Arabidopsis</taxon>
    </lineage>
</organism>
<sequence>MAEACGVRRMKLGSQGLEVSAQGLGCMGLSAFYGAPKPENEAIALIHHAIHSGVTLLDTSDIYGPETNEVLLGKALKDGVREKVELATKFGISYAEGKREVRGDPEYVRAACEASLKRLDIACIDLYYQHRVDTRVPIEITMGELKKLVEEGKIKYIGLSEASASTIRRAHAVHPITAVQIEWSLWTRDVEEEIIPTCRELGIGIVAYSPLGRGFFASGPKLVENLEKDDFRKALPRFQEENLDHNKIVYEKVCAISEKKGCTPGQLALAWVHHQGDDVCPIPGTTKIENLKQNIGALSVKLTPEEMTELEAIAQPGFVKGDRYSNMIPTFKNAETPPLSAWKAA</sequence>
<keyword id="KW-0521">NADP</keyword>
<keyword id="KW-0560">Oxidoreductase</keyword>
<keyword id="KW-1185">Reference proteome</keyword>
<protein>
    <recommendedName>
        <fullName>Probable aldo-keto reductase 4</fullName>
        <ecNumber>1.1.1.-</ecNumber>
    </recommendedName>
</protein>
<evidence type="ECO:0000250" key="1"/>
<evidence type="ECO:0000269" key="2">
    <source>
    </source>
</evidence>
<evidence type="ECO:0000305" key="3"/>
<name>ALKR4_ARATH</name>
<comment type="induction">
    <text evidence="2">Up-regulated by iron and sulfur starvation.</text>
</comment>
<comment type="similarity">
    <text evidence="3">Belongs to the aldo/keto reductase family.</text>
</comment>
<comment type="caution">
    <text evidence="3">Reported as ATB2 in TAIR. The origin of the name is unclear and this protein should not be mixed with bZIP family protein ATB2.</text>
</comment>
<comment type="sequence caution" evidence="3">
    <conflict type="erroneous gene model prediction">
        <sequence resource="EMBL-CDS" id="AAB71960"/>
    </conflict>
</comment>
<comment type="sequence caution" evidence="3">
    <conflict type="erroneous initiation">
        <sequence resource="EMBL-CDS" id="AAB71960"/>
    </conflict>
    <text>Truncated N-terminus.</text>
</comment>
<feature type="chain" id="PRO_0000415743" description="Probable aldo-keto reductase 4">
    <location>
        <begin position="1"/>
        <end position="345"/>
    </location>
</feature>
<feature type="active site" description="Proton donor" evidence="1">
    <location>
        <position position="63"/>
    </location>
</feature>
<feature type="binding site" evidence="1">
    <location>
        <position position="130"/>
    </location>
    <ligand>
        <name>substrate</name>
    </ligand>
</feature>
<feature type="binding site" evidence="1">
    <location>
        <begin position="209"/>
        <end position="219"/>
    </location>
    <ligand>
        <name>NADP(+)</name>
        <dbReference type="ChEBI" id="CHEBI:58349"/>
    </ligand>
</feature>
<feature type="sequence conflict" description="In Ref. 2; AAF17106." evidence="3" ref="2">
    <original>SL</original>
    <variation>KF</variation>
    <location>
        <begin position="115"/>
        <end position="116"/>
    </location>
</feature>
<feature type="sequence conflict" description="In Ref. 6; CAA81199." evidence="3" ref="6">
    <original>Q</original>
    <variation>A</variation>
    <location>
        <position position="180"/>
    </location>
</feature>
<feature type="sequence conflict" description="In Ref. 6; CAA81199." evidence="3" ref="6">
    <original>R</original>
    <variation>E</variation>
    <location>
        <position position="213"/>
    </location>
</feature>
<gene>
    <name type="ordered locus">At1g60710</name>
    <name type="ORF">F8A5.23</name>
</gene>
<accession>Q93ZN2</accession>
<accession>O22709</accession>
<accession>Q42080</accession>
<accession>Q9SEX1</accession>
<reference key="1">
    <citation type="journal article" date="2004" name="Plant Physiol.">
        <title>The Arabidopsis genome sequence as a tool for genome analysis in the Brassicaceae: a comparison of the Arabidopsis thaliana and Capsella rubella genomes.</title>
        <authorList>
            <person name="Boivin K."/>
            <person name="Acarkan A."/>
            <person name="Mbulu R.S."/>
            <person name="Clarenz O."/>
            <person name="Schmidt R."/>
        </authorList>
    </citation>
    <scope>NUCLEOTIDE SEQUENCE [MRNA]</scope>
</reference>
<reference key="2">
    <citation type="submission" date="1998-04" db="EMBL/GenBank/DDBJ databases">
        <title>Guard cell protein.</title>
        <authorList>
            <person name="Spoormaker P."/>
            <person name="Palme K."/>
        </authorList>
    </citation>
    <scope>NUCLEOTIDE SEQUENCE [MRNA]</scope>
    <source>
        <strain>cv. Columbia</strain>
    </source>
</reference>
<reference key="3">
    <citation type="journal article" date="2000" name="Nature">
        <title>Sequence and analysis of chromosome 1 of the plant Arabidopsis thaliana.</title>
        <authorList>
            <person name="Theologis A."/>
            <person name="Ecker J.R."/>
            <person name="Palm C.J."/>
            <person name="Federspiel N.A."/>
            <person name="Kaul S."/>
            <person name="White O."/>
            <person name="Alonso J."/>
            <person name="Altafi H."/>
            <person name="Araujo R."/>
            <person name="Bowman C.L."/>
            <person name="Brooks S.Y."/>
            <person name="Buehler E."/>
            <person name="Chan A."/>
            <person name="Chao Q."/>
            <person name="Chen H."/>
            <person name="Cheuk R.F."/>
            <person name="Chin C.W."/>
            <person name="Chung M.K."/>
            <person name="Conn L."/>
            <person name="Conway A.B."/>
            <person name="Conway A.R."/>
            <person name="Creasy T.H."/>
            <person name="Dewar K."/>
            <person name="Dunn P."/>
            <person name="Etgu P."/>
            <person name="Feldblyum T.V."/>
            <person name="Feng J.-D."/>
            <person name="Fong B."/>
            <person name="Fujii C.Y."/>
            <person name="Gill J.E."/>
            <person name="Goldsmith A.D."/>
            <person name="Haas B."/>
            <person name="Hansen N.F."/>
            <person name="Hughes B."/>
            <person name="Huizar L."/>
            <person name="Hunter J.L."/>
            <person name="Jenkins J."/>
            <person name="Johnson-Hopson C."/>
            <person name="Khan S."/>
            <person name="Khaykin E."/>
            <person name="Kim C.J."/>
            <person name="Koo H.L."/>
            <person name="Kremenetskaia I."/>
            <person name="Kurtz D.B."/>
            <person name="Kwan A."/>
            <person name="Lam B."/>
            <person name="Langin-Hooper S."/>
            <person name="Lee A."/>
            <person name="Lee J.M."/>
            <person name="Lenz C.A."/>
            <person name="Li J.H."/>
            <person name="Li Y.-P."/>
            <person name="Lin X."/>
            <person name="Liu S.X."/>
            <person name="Liu Z.A."/>
            <person name="Luros J.S."/>
            <person name="Maiti R."/>
            <person name="Marziali A."/>
            <person name="Militscher J."/>
            <person name="Miranda M."/>
            <person name="Nguyen M."/>
            <person name="Nierman W.C."/>
            <person name="Osborne B.I."/>
            <person name="Pai G."/>
            <person name="Peterson J."/>
            <person name="Pham P.K."/>
            <person name="Rizzo M."/>
            <person name="Rooney T."/>
            <person name="Rowley D."/>
            <person name="Sakano H."/>
            <person name="Salzberg S.L."/>
            <person name="Schwartz J.R."/>
            <person name="Shinn P."/>
            <person name="Southwick A.M."/>
            <person name="Sun H."/>
            <person name="Tallon L.J."/>
            <person name="Tambunga G."/>
            <person name="Toriumi M.J."/>
            <person name="Town C.D."/>
            <person name="Utterback T."/>
            <person name="Van Aken S."/>
            <person name="Vaysberg M."/>
            <person name="Vysotskaia V.S."/>
            <person name="Walker M."/>
            <person name="Wu D."/>
            <person name="Yu G."/>
            <person name="Fraser C.M."/>
            <person name="Venter J.C."/>
            <person name="Davis R.W."/>
        </authorList>
    </citation>
    <scope>NUCLEOTIDE SEQUENCE [LARGE SCALE GENOMIC DNA]</scope>
    <source>
        <strain>cv. Columbia</strain>
    </source>
</reference>
<reference key="4">
    <citation type="journal article" date="2017" name="Plant J.">
        <title>Araport11: a complete reannotation of the Arabidopsis thaliana reference genome.</title>
        <authorList>
            <person name="Cheng C.Y."/>
            <person name="Krishnakumar V."/>
            <person name="Chan A.P."/>
            <person name="Thibaud-Nissen F."/>
            <person name="Schobel S."/>
            <person name="Town C.D."/>
        </authorList>
    </citation>
    <scope>GENOME REANNOTATION</scope>
    <source>
        <strain>cv. Columbia</strain>
    </source>
</reference>
<reference key="5">
    <citation type="journal article" date="2003" name="Science">
        <title>Empirical analysis of transcriptional activity in the Arabidopsis genome.</title>
        <authorList>
            <person name="Yamada K."/>
            <person name="Lim J."/>
            <person name="Dale J.M."/>
            <person name="Chen H."/>
            <person name="Shinn P."/>
            <person name="Palm C.J."/>
            <person name="Southwick A.M."/>
            <person name="Wu H.C."/>
            <person name="Kim C.J."/>
            <person name="Nguyen M."/>
            <person name="Pham P.K."/>
            <person name="Cheuk R.F."/>
            <person name="Karlin-Newmann G."/>
            <person name="Liu S.X."/>
            <person name="Lam B."/>
            <person name="Sakano H."/>
            <person name="Wu T."/>
            <person name="Yu G."/>
            <person name="Miranda M."/>
            <person name="Quach H.L."/>
            <person name="Tripp M."/>
            <person name="Chang C.H."/>
            <person name="Lee J.M."/>
            <person name="Toriumi M.J."/>
            <person name="Chan M.M."/>
            <person name="Tang C.C."/>
            <person name="Onodera C.S."/>
            <person name="Deng J.M."/>
            <person name="Akiyama K."/>
            <person name="Ansari Y."/>
            <person name="Arakawa T."/>
            <person name="Banh J."/>
            <person name="Banno F."/>
            <person name="Bowser L."/>
            <person name="Brooks S.Y."/>
            <person name="Carninci P."/>
            <person name="Chao Q."/>
            <person name="Choy N."/>
            <person name="Enju A."/>
            <person name="Goldsmith A.D."/>
            <person name="Gurjal M."/>
            <person name="Hansen N.F."/>
            <person name="Hayashizaki Y."/>
            <person name="Johnson-Hopson C."/>
            <person name="Hsuan V.W."/>
            <person name="Iida K."/>
            <person name="Karnes M."/>
            <person name="Khan S."/>
            <person name="Koesema E."/>
            <person name="Ishida J."/>
            <person name="Jiang P.X."/>
            <person name="Jones T."/>
            <person name="Kawai J."/>
            <person name="Kamiya A."/>
            <person name="Meyers C."/>
            <person name="Nakajima M."/>
            <person name="Narusaka M."/>
            <person name="Seki M."/>
            <person name="Sakurai T."/>
            <person name="Satou M."/>
            <person name="Tamse R."/>
            <person name="Vaysberg M."/>
            <person name="Wallender E.K."/>
            <person name="Wong C."/>
            <person name="Yamamura Y."/>
            <person name="Yuan S."/>
            <person name="Shinozaki K."/>
            <person name="Davis R.W."/>
            <person name="Theologis A."/>
            <person name="Ecker J.R."/>
        </authorList>
    </citation>
    <scope>NUCLEOTIDE SEQUENCE [LARGE SCALE MRNA]</scope>
    <source>
        <strain>cv. Columbia</strain>
    </source>
</reference>
<reference key="6">
    <citation type="submission" date="1993-09" db="EMBL/GenBank/DDBJ databases">
        <title>The Arabidopsis thaliana transcribed genome: the GDR cDNA program.</title>
        <authorList>
            <person name="Hofte H."/>
        </authorList>
    </citation>
    <scope>NUCLEOTIDE SEQUENCE [MRNA] OF 170-295</scope>
    <source>
        <strain>cv. Columbia</strain>
        <tissue>Seedling</tissue>
    </source>
</reference>
<reference key="7">
    <citation type="journal article" date="2003" name="Plant J.">
        <title>Transcriptome analysis of sulfur depletion in Arabidopsis thaliana: interlacing of biosynthetic pathways provides response specificity.</title>
        <authorList>
            <person name="Nikiforova V."/>
            <person name="Freitag J."/>
            <person name="Kempa S."/>
            <person name="Adamik M."/>
            <person name="Hesse H."/>
            <person name="Hoefgen R."/>
        </authorList>
    </citation>
    <scope>INDUCTION BY IRON AND SULFUR</scope>
</reference>
<dbReference type="EC" id="1.1.1.-"/>
<dbReference type="EMBL" id="AJ608277">
    <property type="protein sequence ID" value="CAE55217.1"/>
    <property type="molecule type" value="mRNA"/>
</dbReference>
<dbReference type="EMBL" id="AF057715">
    <property type="protein sequence ID" value="AAF17106.1"/>
    <property type="molecule type" value="mRNA"/>
</dbReference>
<dbReference type="EMBL" id="AC002292">
    <property type="protein sequence ID" value="AAB71960.1"/>
    <property type="status" value="ALT_SEQ"/>
    <property type="molecule type" value="Genomic_DNA"/>
</dbReference>
<dbReference type="EMBL" id="CP002684">
    <property type="protein sequence ID" value="AEE33722.1"/>
    <property type="molecule type" value="Genomic_DNA"/>
</dbReference>
<dbReference type="EMBL" id="AY056440">
    <property type="protein sequence ID" value="AAL08296.1"/>
    <property type="molecule type" value="mRNA"/>
</dbReference>
<dbReference type="EMBL" id="AY099655">
    <property type="protein sequence ID" value="AAM20506.1"/>
    <property type="molecule type" value="mRNA"/>
</dbReference>
<dbReference type="EMBL" id="BT000251">
    <property type="protein sequence ID" value="AAN15570.1"/>
    <property type="molecule type" value="mRNA"/>
</dbReference>
<dbReference type="EMBL" id="Z26233">
    <property type="protein sequence ID" value="CAA81199.1"/>
    <property type="molecule type" value="mRNA"/>
</dbReference>
<dbReference type="PIR" id="E96632">
    <property type="entry name" value="E96632"/>
</dbReference>
<dbReference type="RefSeq" id="NP_564761.1">
    <property type="nucleotide sequence ID" value="NM_104754.4"/>
</dbReference>
<dbReference type="SMR" id="Q93ZN2"/>
<dbReference type="FunCoup" id="Q93ZN2">
    <property type="interactions" value="965"/>
</dbReference>
<dbReference type="IntAct" id="Q93ZN2">
    <property type="interactions" value="1"/>
</dbReference>
<dbReference type="STRING" id="3702.Q93ZN2"/>
<dbReference type="MetOSite" id="Q93ZN2"/>
<dbReference type="PaxDb" id="3702-AT1G60710.1"/>
<dbReference type="ProteomicsDB" id="245074"/>
<dbReference type="EnsemblPlants" id="AT1G60710.1">
    <property type="protein sequence ID" value="AT1G60710.1"/>
    <property type="gene ID" value="AT1G60710"/>
</dbReference>
<dbReference type="GeneID" id="842365"/>
<dbReference type="Gramene" id="AT1G60710.1">
    <property type="protein sequence ID" value="AT1G60710.1"/>
    <property type="gene ID" value="AT1G60710"/>
</dbReference>
<dbReference type="KEGG" id="ath:AT1G60710"/>
<dbReference type="Araport" id="AT1G60710"/>
<dbReference type="TAIR" id="AT1G60710">
    <property type="gene designation" value="ATB2"/>
</dbReference>
<dbReference type="eggNOG" id="KOG1575">
    <property type="taxonomic scope" value="Eukaryota"/>
</dbReference>
<dbReference type="HOGENOM" id="CLU_023205_2_1_1"/>
<dbReference type="InParanoid" id="Q93ZN2"/>
<dbReference type="OMA" id="MSDFYTT"/>
<dbReference type="OrthoDB" id="37537at2759"/>
<dbReference type="PhylomeDB" id="Q93ZN2"/>
<dbReference type="BioCyc" id="ARA:AT1G60710-MONOMER"/>
<dbReference type="PRO" id="PR:Q93ZN2"/>
<dbReference type="Proteomes" id="UP000006548">
    <property type="component" value="Chromosome 1"/>
</dbReference>
<dbReference type="ExpressionAtlas" id="Q93ZN2">
    <property type="expression patterns" value="baseline and differential"/>
</dbReference>
<dbReference type="GO" id="GO:0005829">
    <property type="term" value="C:cytosol"/>
    <property type="evidence" value="ECO:0007005"/>
    <property type="project" value="TAIR"/>
</dbReference>
<dbReference type="GO" id="GO:0005634">
    <property type="term" value="C:nucleus"/>
    <property type="evidence" value="ECO:0007005"/>
    <property type="project" value="TAIR"/>
</dbReference>
<dbReference type="GO" id="GO:0016491">
    <property type="term" value="F:oxidoreductase activity"/>
    <property type="evidence" value="ECO:0007669"/>
    <property type="project" value="UniProtKB-KW"/>
</dbReference>
<dbReference type="CDD" id="cd19145">
    <property type="entry name" value="AKR_AKR13D1"/>
    <property type="match status" value="1"/>
</dbReference>
<dbReference type="FunFam" id="3.20.20.100:FF:000048">
    <property type="entry name" value="Probable aldo-keto reductase 4"/>
    <property type="match status" value="1"/>
</dbReference>
<dbReference type="Gene3D" id="3.20.20.100">
    <property type="entry name" value="NADP-dependent oxidoreductase domain"/>
    <property type="match status" value="1"/>
</dbReference>
<dbReference type="InterPro" id="IPR020471">
    <property type="entry name" value="AKR"/>
</dbReference>
<dbReference type="InterPro" id="IPR050791">
    <property type="entry name" value="Aldo-Keto_reductase"/>
</dbReference>
<dbReference type="InterPro" id="IPR023210">
    <property type="entry name" value="NADP_OxRdtase_dom"/>
</dbReference>
<dbReference type="InterPro" id="IPR036812">
    <property type="entry name" value="NADP_OxRdtase_dom_sf"/>
</dbReference>
<dbReference type="PANTHER" id="PTHR43625">
    <property type="entry name" value="AFLATOXIN B1 ALDEHYDE REDUCTASE"/>
    <property type="match status" value="1"/>
</dbReference>
<dbReference type="PANTHER" id="PTHR43625:SF40">
    <property type="entry name" value="ALDO-KETO REDUCTASE YAKC [NADP(+)]"/>
    <property type="match status" value="1"/>
</dbReference>
<dbReference type="Pfam" id="PF00248">
    <property type="entry name" value="Aldo_ket_red"/>
    <property type="match status" value="1"/>
</dbReference>
<dbReference type="PRINTS" id="PR00069">
    <property type="entry name" value="ALDKETRDTASE"/>
</dbReference>
<dbReference type="SUPFAM" id="SSF51430">
    <property type="entry name" value="NAD(P)-linked oxidoreductase"/>
    <property type="match status" value="1"/>
</dbReference>
<proteinExistence type="evidence at transcript level"/>